<reference key="1">
    <citation type="journal article" date="2001" name="Nature">
        <title>Complete genome sequence of a multiple drug resistant Salmonella enterica serovar Typhi CT18.</title>
        <authorList>
            <person name="Parkhill J."/>
            <person name="Dougan G."/>
            <person name="James K.D."/>
            <person name="Thomson N.R."/>
            <person name="Pickard D."/>
            <person name="Wain J."/>
            <person name="Churcher C.M."/>
            <person name="Mungall K.L."/>
            <person name="Bentley S.D."/>
            <person name="Holden M.T.G."/>
            <person name="Sebaihia M."/>
            <person name="Baker S."/>
            <person name="Basham D."/>
            <person name="Brooks K."/>
            <person name="Chillingworth T."/>
            <person name="Connerton P."/>
            <person name="Cronin A."/>
            <person name="Davis P."/>
            <person name="Davies R.M."/>
            <person name="Dowd L."/>
            <person name="White N."/>
            <person name="Farrar J."/>
            <person name="Feltwell T."/>
            <person name="Hamlin N."/>
            <person name="Haque A."/>
            <person name="Hien T.T."/>
            <person name="Holroyd S."/>
            <person name="Jagels K."/>
            <person name="Krogh A."/>
            <person name="Larsen T.S."/>
            <person name="Leather S."/>
            <person name="Moule S."/>
            <person name="O'Gaora P."/>
            <person name="Parry C."/>
            <person name="Quail M.A."/>
            <person name="Rutherford K.M."/>
            <person name="Simmonds M."/>
            <person name="Skelton J."/>
            <person name="Stevens K."/>
            <person name="Whitehead S."/>
            <person name="Barrell B.G."/>
        </authorList>
    </citation>
    <scope>NUCLEOTIDE SEQUENCE [LARGE SCALE GENOMIC DNA]</scope>
    <source>
        <strain>CT18</strain>
    </source>
</reference>
<reference key="2">
    <citation type="journal article" date="2003" name="J. Bacteriol.">
        <title>Comparative genomics of Salmonella enterica serovar Typhi strains Ty2 and CT18.</title>
        <authorList>
            <person name="Deng W."/>
            <person name="Liou S.-R."/>
            <person name="Plunkett G. III"/>
            <person name="Mayhew G.F."/>
            <person name="Rose D.J."/>
            <person name="Burland V."/>
            <person name="Kodoyianni V."/>
            <person name="Schwartz D.C."/>
            <person name="Blattner F.R."/>
        </authorList>
    </citation>
    <scope>NUCLEOTIDE SEQUENCE [LARGE SCALE GENOMIC DNA]</scope>
    <source>
        <strain>ATCC 700931 / Ty2</strain>
    </source>
</reference>
<dbReference type="EC" id="1.7.1.13" evidence="1"/>
<dbReference type="EMBL" id="AL513382">
    <property type="protein sequence ID" value="CAD06081.1"/>
    <property type="molecule type" value="Genomic_DNA"/>
</dbReference>
<dbReference type="EMBL" id="AE014613">
    <property type="protein sequence ID" value="AAO70432.1"/>
    <property type="molecule type" value="Genomic_DNA"/>
</dbReference>
<dbReference type="RefSeq" id="NP_457363.1">
    <property type="nucleotide sequence ID" value="NC_003198.1"/>
</dbReference>
<dbReference type="RefSeq" id="WP_000100463.1">
    <property type="nucleotide sequence ID" value="NZ_WSUR01000005.1"/>
</dbReference>
<dbReference type="SMR" id="Q8Z437"/>
<dbReference type="STRING" id="220341.gene:17586992"/>
<dbReference type="KEGG" id="stt:t2876"/>
<dbReference type="KEGG" id="sty:STY3107"/>
<dbReference type="PATRIC" id="fig|220341.7.peg.3161"/>
<dbReference type="eggNOG" id="COG0780">
    <property type="taxonomic scope" value="Bacteria"/>
</dbReference>
<dbReference type="eggNOG" id="COG2904">
    <property type="taxonomic scope" value="Bacteria"/>
</dbReference>
<dbReference type="HOGENOM" id="CLU_054738_0_0_6"/>
<dbReference type="OMA" id="QCVERIY"/>
<dbReference type="UniPathway" id="UPA00392"/>
<dbReference type="Proteomes" id="UP000000541">
    <property type="component" value="Chromosome"/>
</dbReference>
<dbReference type="Proteomes" id="UP000002670">
    <property type="component" value="Chromosome"/>
</dbReference>
<dbReference type="GO" id="GO:0005737">
    <property type="term" value="C:cytoplasm"/>
    <property type="evidence" value="ECO:0007669"/>
    <property type="project" value="UniProtKB-SubCell"/>
</dbReference>
<dbReference type="GO" id="GO:0033739">
    <property type="term" value="F:preQ1 synthase activity"/>
    <property type="evidence" value="ECO:0007669"/>
    <property type="project" value="UniProtKB-UniRule"/>
</dbReference>
<dbReference type="GO" id="GO:0008616">
    <property type="term" value="P:queuosine biosynthetic process"/>
    <property type="evidence" value="ECO:0007669"/>
    <property type="project" value="UniProtKB-UniRule"/>
</dbReference>
<dbReference type="GO" id="GO:0006400">
    <property type="term" value="P:tRNA modification"/>
    <property type="evidence" value="ECO:0007669"/>
    <property type="project" value="UniProtKB-UniRule"/>
</dbReference>
<dbReference type="FunFam" id="3.30.1130.10:FF:000004">
    <property type="entry name" value="NADPH-dependent 7-cyano-7-deazaguanine reductase"/>
    <property type="match status" value="1"/>
</dbReference>
<dbReference type="Gene3D" id="3.30.1130.10">
    <property type="match status" value="2"/>
</dbReference>
<dbReference type="HAMAP" id="MF_00817">
    <property type="entry name" value="QueF_type2"/>
    <property type="match status" value="1"/>
</dbReference>
<dbReference type="InterPro" id="IPR043133">
    <property type="entry name" value="GTP-CH-I_C/QueF"/>
</dbReference>
<dbReference type="InterPro" id="IPR050084">
    <property type="entry name" value="NADPH_dep_7-cyano-7-deazaG_red"/>
</dbReference>
<dbReference type="InterPro" id="IPR029500">
    <property type="entry name" value="QueF"/>
</dbReference>
<dbReference type="InterPro" id="IPR029139">
    <property type="entry name" value="QueF_N"/>
</dbReference>
<dbReference type="InterPro" id="IPR016428">
    <property type="entry name" value="QueF_type2"/>
</dbReference>
<dbReference type="NCBIfam" id="TIGR03138">
    <property type="entry name" value="QueF"/>
    <property type="match status" value="1"/>
</dbReference>
<dbReference type="PANTHER" id="PTHR34354">
    <property type="entry name" value="NADPH-DEPENDENT 7-CYANO-7-DEAZAGUANINE REDUCTASE"/>
    <property type="match status" value="1"/>
</dbReference>
<dbReference type="PANTHER" id="PTHR34354:SF1">
    <property type="entry name" value="NADPH-DEPENDENT 7-CYANO-7-DEAZAGUANINE REDUCTASE"/>
    <property type="match status" value="1"/>
</dbReference>
<dbReference type="Pfam" id="PF14489">
    <property type="entry name" value="QueF"/>
    <property type="match status" value="1"/>
</dbReference>
<dbReference type="Pfam" id="PF14819">
    <property type="entry name" value="QueF_N"/>
    <property type="match status" value="1"/>
</dbReference>
<dbReference type="PIRSF" id="PIRSF004750">
    <property type="entry name" value="Nitrile_oxidored_YqcD_prd"/>
    <property type="match status" value="1"/>
</dbReference>
<dbReference type="SUPFAM" id="SSF55620">
    <property type="entry name" value="Tetrahydrobiopterin biosynthesis enzymes-like"/>
    <property type="match status" value="1"/>
</dbReference>
<protein>
    <recommendedName>
        <fullName evidence="1">NADPH-dependent 7-cyano-7-deazaguanine reductase</fullName>
        <ecNumber evidence="1">1.7.1.13</ecNumber>
    </recommendedName>
    <alternativeName>
        <fullName evidence="1">7-cyano-7-carbaguanine reductase</fullName>
    </alternativeName>
    <alternativeName>
        <fullName evidence="1">NADPH-dependent nitrile oxidoreductase</fullName>
    </alternativeName>
    <alternativeName>
        <fullName evidence="1">PreQ(0) reductase</fullName>
    </alternativeName>
</protein>
<sequence length="282" mass="32645">MSSYENHQALDGLTLGKSTDYRDNYDASLLQGVPRSLNRDPLGLTADNLPFHGADIWTLYELSWLNSQGLPQVAVGHVELDYTSVNLIESKSFKLYLNSFNQTRFDTWETVRQTLERDLRACAQGNVSVRLHRLDELEGQPVAHFHGTCIDDQDISIDNYQFTTDYLQHAVSGEKQVEETLVSHLLKSNCLITHQPDWGSIQIQYRGRKIDREKLLRYLVSFRHHNEFHEQCVERIFNDILRFCQPETLSVYARYTRRGGLDINPWRSNTDFVPATGRLARQ</sequence>
<accession>Q8Z437</accession>
<accession>Q7C7I2</accession>
<evidence type="ECO:0000255" key="1">
    <source>
        <dbReference type="HAMAP-Rule" id="MF_00817"/>
    </source>
</evidence>
<name>QUEF_SALTI</name>
<comment type="function">
    <text evidence="1">Catalyzes the NADPH-dependent reduction of 7-cyano-7-deazaguanine (preQ0) to 7-aminomethyl-7-deazaguanine (preQ1).</text>
</comment>
<comment type="catalytic activity">
    <reaction evidence="1">
        <text>7-aminomethyl-7-carbaguanine + 2 NADP(+) = 7-cyano-7-deazaguanine + 2 NADPH + 3 H(+)</text>
        <dbReference type="Rhea" id="RHEA:13409"/>
        <dbReference type="ChEBI" id="CHEBI:15378"/>
        <dbReference type="ChEBI" id="CHEBI:45075"/>
        <dbReference type="ChEBI" id="CHEBI:57783"/>
        <dbReference type="ChEBI" id="CHEBI:58349"/>
        <dbReference type="ChEBI" id="CHEBI:58703"/>
        <dbReference type="EC" id="1.7.1.13"/>
    </reaction>
</comment>
<comment type="pathway">
    <text evidence="1">tRNA modification; tRNA-queuosine biosynthesis.</text>
</comment>
<comment type="subunit">
    <text evidence="1">Homodimer.</text>
</comment>
<comment type="subcellular location">
    <subcellularLocation>
        <location evidence="1">Cytoplasm</location>
    </subcellularLocation>
</comment>
<comment type="similarity">
    <text evidence="1">Belongs to the GTP cyclohydrolase I family. QueF type 2 subfamily.</text>
</comment>
<keyword id="KW-0963">Cytoplasm</keyword>
<keyword id="KW-0521">NADP</keyword>
<keyword id="KW-0560">Oxidoreductase</keyword>
<keyword id="KW-0671">Queuosine biosynthesis</keyword>
<feature type="chain" id="PRO_0000163058" description="NADPH-dependent 7-cyano-7-deazaguanine reductase">
    <location>
        <begin position="1"/>
        <end position="282"/>
    </location>
</feature>
<feature type="active site" description="Thioimide intermediate" evidence="1">
    <location>
        <position position="190"/>
    </location>
</feature>
<feature type="active site" description="Proton donor" evidence="1">
    <location>
        <position position="197"/>
    </location>
</feature>
<feature type="binding site" evidence="1">
    <location>
        <begin position="88"/>
        <end position="90"/>
    </location>
    <ligand>
        <name>substrate</name>
    </ligand>
</feature>
<feature type="binding site" evidence="1">
    <location>
        <begin position="90"/>
        <end position="91"/>
    </location>
    <ligand>
        <name>NADPH</name>
        <dbReference type="ChEBI" id="CHEBI:57783"/>
    </ligand>
</feature>
<feature type="binding site" evidence="1">
    <location>
        <begin position="229"/>
        <end position="230"/>
    </location>
    <ligand>
        <name>substrate</name>
    </ligand>
</feature>
<feature type="binding site" evidence="1">
    <location>
        <begin position="258"/>
        <end position="259"/>
    </location>
    <ligand>
        <name>NADPH</name>
        <dbReference type="ChEBI" id="CHEBI:57783"/>
    </ligand>
</feature>
<organism>
    <name type="scientific">Salmonella typhi</name>
    <dbReference type="NCBI Taxonomy" id="90370"/>
    <lineage>
        <taxon>Bacteria</taxon>
        <taxon>Pseudomonadati</taxon>
        <taxon>Pseudomonadota</taxon>
        <taxon>Gammaproteobacteria</taxon>
        <taxon>Enterobacterales</taxon>
        <taxon>Enterobacteriaceae</taxon>
        <taxon>Salmonella</taxon>
    </lineage>
</organism>
<gene>
    <name evidence="1" type="primary">queF</name>
    <name type="ordered locus">STY3107</name>
    <name type="ordered locus">t2876</name>
</gene>
<proteinExistence type="inferred from homology"/>